<accession>Q8E2B1</accession>
<keyword id="KW-0240">DNA-directed RNA polymerase</keyword>
<keyword id="KW-0548">Nucleotidyltransferase</keyword>
<keyword id="KW-1185">Reference proteome</keyword>
<keyword id="KW-0804">Transcription</keyword>
<keyword id="KW-0808">Transferase</keyword>
<dbReference type="EC" id="2.7.7.6" evidence="1"/>
<dbReference type="EMBL" id="AE009948">
    <property type="protein sequence ID" value="AAM98992.1"/>
    <property type="molecule type" value="Genomic_DNA"/>
</dbReference>
<dbReference type="RefSeq" id="NP_687120.1">
    <property type="nucleotide sequence ID" value="NC_004116.1"/>
</dbReference>
<dbReference type="RefSeq" id="WP_000568977.1">
    <property type="nucleotide sequence ID" value="NC_004116.1"/>
</dbReference>
<dbReference type="SMR" id="Q8E2B1"/>
<dbReference type="STRING" id="208435.SAG0084"/>
<dbReference type="KEGG" id="sag:SAG0084"/>
<dbReference type="PATRIC" id="fig|208435.3.peg.83"/>
<dbReference type="HOGENOM" id="CLU_053084_0_1_9"/>
<dbReference type="OrthoDB" id="9805706at2"/>
<dbReference type="Proteomes" id="UP000000821">
    <property type="component" value="Chromosome"/>
</dbReference>
<dbReference type="GO" id="GO:0005737">
    <property type="term" value="C:cytoplasm"/>
    <property type="evidence" value="ECO:0007669"/>
    <property type="project" value="UniProtKB-ARBA"/>
</dbReference>
<dbReference type="GO" id="GO:0000428">
    <property type="term" value="C:DNA-directed RNA polymerase complex"/>
    <property type="evidence" value="ECO:0007669"/>
    <property type="project" value="UniProtKB-KW"/>
</dbReference>
<dbReference type="GO" id="GO:0003677">
    <property type="term" value="F:DNA binding"/>
    <property type="evidence" value="ECO:0007669"/>
    <property type="project" value="UniProtKB-UniRule"/>
</dbReference>
<dbReference type="GO" id="GO:0003899">
    <property type="term" value="F:DNA-directed RNA polymerase activity"/>
    <property type="evidence" value="ECO:0007669"/>
    <property type="project" value="UniProtKB-UniRule"/>
</dbReference>
<dbReference type="GO" id="GO:0046983">
    <property type="term" value="F:protein dimerization activity"/>
    <property type="evidence" value="ECO:0007669"/>
    <property type="project" value="InterPro"/>
</dbReference>
<dbReference type="GO" id="GO:0006351">
    <property type="term" value="P:DNA-templated transcription"/>
    <property type="evidence" value="ECO:0007669"/>
    <property type="project" value="UniProtKB-UniRule"/>
</dbReference>
<dbReference type="CDD" id="cd06928">
    <property type="entry name" value="RNAP_alpha_NTD"/>
    <property type="match status" value="1"/>
</dbReference>
<dbReference type="FunFam" id="1.10.150.20:FF:000001">
    <property type="entry name" value="DNA-directed RNA polymerase subunit alpha"/>
    <property type="match status" value="1"/>
</dbReference>
<dbReference type="FunFam" id="2.170.120.12:FF:000001">
    <property type="entry name" value="DNA-directed RNA polymerase subunit alpha"/>
    <property type="match status" value="1"/>
</dbReference>
<dbReference type="Gene3D" id="1.10.150.20">
    <property type="entry name" value="5' to 3' exonuclease, C-terminal subdomain"/>
    <property type="match status" value="1"/>
</dbReference>
<dbReference type="Gene3D" id="2.170.120.12">
    <property type="entry name" value="DNA-directed RNA polymerase, insert domain"/>
    <property type="match status" value="1"/>
</dbReference>
<dbReference type="Gene3D" id="3.30.1360.10">
    <property type="entry name" value="RNA polymerase, RBP11-like subunit"/>
    <property type="match status" value="1"/>
</dbReference>
<dbReference type="HAMAP" id="MF_00059">
    <property type="entry name" value="RNApol_bact_RpoA"/>
    <property type="match status" value="1"/>
</dbReference>
<dbReference type="InterPro" id="IPR011262">
    <property type="entry name" value="DNA-dir_RNA_pol_insert"/>
</dbReference>
<dbReference type="InterPro" id="IPR011263">
    <property type="entry name" value="DNA-dir_RNA_pol_RpoA/D/Rpb3"/>
</dbReference>
<dbReference type="InterPro" id="IPR011773">
    <property type="entry name" value="DNA-dir_RpoA"/>
</dbReference>
<dbReference type="InterPro" id="IPR036603">
    <property type="entry name" value="RBP11-like"/>
</dbReference>
<dbReference type="InterPro" id="IPR011260">
    <property type="entry name" value="RNAP_asu_C"/>
</dbReference>
<dbReference type="InterPro" id="IPR036643">
    <property type="entry name" value="RNApol_insert_sf"/>
</dbReference>
<dbReference type="NCBIfam" id="NF003513">
    <property type="entry name" value="PRK05182.1-2"/>
    <property type="match status" value="1"/>
</dbReference>
<dbReference type="NCBIfam" id="NF003515">
    <property type="entry name" value="PRK05182.2-1"/>
    <property type="match status" value="1"/>
</dbReference>
<dbReference type="NCBIfam" id="NF003518">
    <property type="entry name" value="PRK05182.2-4"/>
    <property type="match status" value="1"/>
</dbReference>
<dbReference type="NCBIfam" id="NF003519">
    <property type="entry name" value="PRK05182.2-5"/>
    <property type="match status" value="1"/>
</dbReference>
<dbReference type="NCBIfam" id="TIGR02027">
    <property type="entry name" value="rpoA"/>
    <property type="match status" value="1"/>
</dbReference>
<dbReference type="Pfam" id="PF01000">
    <property type="entry name" value="RNA_pol_A_bac"/>
    <property type="match status" value="1"/>
</dbReference>
<dbReference type="Pfam" id="PF03118">
    <property type="entry name" value="RNA_pol_A_CTD"/>
    <property type="match status" value="1"/>
</dbReference>
<dbReference type="Pfam" id="PF01193">
    <property type="entry name" value="RNA_pol_L"/>
    <property type="match status" value="1"/>
</dbReference>
<dbReference type="SMART" id="SM00662">
    <property type="entry name" value="RPOLD"/>
    <property type="match status" value="1"/>
</dbReference>
<dbReference type="SUPFAM" id="SSF47789">
    <property type="entry name" value="C-terminal domain of RNA polymerase alpha subunit"/>
    <property type="match status" value="1"/>
</dbReference>
<dbReference type="SUPFAM" id="SSF56553">
    <property type="entry name" value="Insert subdomain of RNA polymerase alpha subunit"/>
    <property type="match status" value="1"/>
</dbReference>
<dbReference type="SUPFAM" id="SSF55257">
    <property type="entry name" value="RBP11-like subunits of RNA polymerase"/>
    <property type="match status" value="1"/>
</dbReference>
<proteinExistence type="inferred from homology"/>
<gene>
    <name evidence="1" type="primary">rpoA</name>
    <name type="ordered locus">SAG0084</name>
</gene>
<organism>
    <name type="scientific">Streptococcus agalactiae serotype V (strain ATCC BAA-611 / 2603 V/R)</name>
    <dbReference type="NCBI Taxonomy" id="208435"/>
    <lineage>
        <taxon>Bacteria</taxon>
        <taxon>Bacillati</taxon>
        <taxon>Bacillota</taxon>
        <taxon>Bacilli</taxon>
        <taxon>Lactobacillales</taxon>
        <taxon>Streptococcaceae</taxon>
        <taxon>Streptococcus</taxon>
    </lineage>
</organism>
<sequence>MIEFEKPIITKIDENKDYGRFVIEPLERGYGTTLGNSLRRVLLSSLPGAAVTSIKIDGVLHEFDTIPGVREDVMQIILNVKGLAVKSYVEDEKIIELDVEGPAEITAGDILTDSDIEIVNPDHYLFTIAEGHSLKATMTVAKNRGYVPAEGNKKDDAPVGTLAVDSIYTPVKKVNYQVEPARVGSNDGFDKLTIEIMTNGTIIPEDALGLSARVLIEHLNLFTDLTEVAKATEVMKETEKVNDEKVLDRTIEELDLSVRSYNCLKRAGINTVFDLTEKTEPEMMKVRNLGRKSLEEVKIKLADLGLGLKNDK</sequence>
<protein>
    <recommendedName>
        <fullName evidence="1">DNA-directed RNA polymerase subunit alpha</fullName>
        <shortName evidence="1">RNAP subunit alpha</shortName>
        <ecNumber evidence="1">2.7.7.6</ecNumber>
    </recommendedName>
    <alternativeName>
        <fullName evidence="1">RNA polymerase subunit alpha</fullName>
    </alternativeName>
    <alternativeName>
        <fullName evidence="1">Transcriptase subunit alpha</fullName>
    </alternativeName>
</protein>
<name>RPOA_STRA5</name>
<comment type="function">
    <text evidence="1">DNA-dependent RNA polymerase catalyzes the transcription of DNA into RNA using the four ribonucleoside triphosphates as substrates.</text>
</comment>
<comment type="catalytic activity">
    <reaction evidence="1">
        <text>RNA(n) + a ribonucleoside 5'-triphosphate = RNA(n+1) + diphosphate</text>
        <dbReference type="Rhea" id="RHEA:21248"/>
        <dbReference type="Rhea" id="RHEA-COMP:14527"/>
        <dbReference type="Rhea" id="RHEA-COMP:17342"/>
        <dbReference type="ChEBI" id="CHEBI:33019"/>
        <dbReference type="ChEBI" id="CHEBI:61557"/>
        <dbReference type="ChEBI" id="CHEBI:140395"/>
        <dbReference type="EC" id="2.7.7.6"/>
    </reaction>
</comment>
<comment type="subunit">
    <text evidence="1">Homodimer. The RNAP catalytic core consists of 2 alpha, 1 beta, 1 beta' and 1 omega subunit. When a sigma factor is associated with the core the holoenzyme is formed, which can initiate transcription.</text>
</comment>
<comment type="domain">
    <text evidence="1">The N-terminal domain is essential for RNAP assembly and basal transcription, whereas the C-terminal domain is involved in interaction with transcriptional regulators and with upstream promoter elements.</text>
</comment>
<comment type="similarity">
    <text evidence="1">Belongs to the RNA polymerase alpha chain family.</text>
</comment>
<evidence type="ECO:0000255" key="1">
    <source>
        <dbReference type="HAMAP-Rule" id="MF_00059"/>
    </source>
</evidence>
<feature type="chain" id="PRO_0000175388" description="DNA-directed RNA polymerase subunit alpha">
    <location>
        <begin position="1"/>
        <end position="312"/>
    </location>
</feature>
<feature type="region of interest" description="Alpha N-terminal domain (alpha-NTD)" evidence="1">
    <location>
        <begin position="1"/>
        <end position="226"/>
    </location>
</feature>
<feature type="region of interest" description="Alpha C-terminal domain (alpha-CTD)" evidence="1">
    <location>
        <begin position="243"/>
        <end position="312"/>
    </location>
</feature>
<reference key="1">
    <citation type="journal article" date="2002" name="Proc. Natl. Acad. Sci. U.S.A.">
        <title>Complete genome sequence and comparative genomic analysis of an emerging human pathogen, serotype V Streptococcus agalactiae.</title>
        <authorList>
            <person name="Tettelin H."/>
            <person name="Masignani V."/>
            <person name="Cieslewicz M.J."/>
            <person name="Eisen J.A."/>
            <person name="Peterson S.N."/>
            <person name="Wessels M.R."/>
            <person name="Paulsen I.T."/>
            <person name="Nelson K.E."/>
            <person name="Margarit I."/>
            <person name="Read T.D."/>
            <person name="Madoff L.C."/>
            <person name="Wolf A.M."/>
            <person name="Beanan M.J."/>
            <person name="Brinkac L.M."/>
            <person name="Daugherty S.C."/>
            <person name="DeBoy R.T."/>
            <person name="Durkin A.S."/>
            <person name="Kolonay J.F."/>
            <person name="Madupu R."/>
            <person name="Lewis M.R."/>
            <person name="Radune D."/>
            <person name="Fedorova N.B."/>
            <person name="Scanlan D."/>
            <person name="Khouri H.M."/>
            <person name="Mulligan S."/>
            <person name="Carty H.A."/>
            <person name="Cline R.T."/>
            <person name="Van Aken S.E."/>
            <person name="Gill J."/>
            <person name="Scarselli M."/>
            <person name="Mora M."/>
            <person name="Iacobini E.T."/>
            <person name="Brettoni C."/>
            <person name="Galli G."/>
            <person name="Mariani M."/>
            <person name="Vegni F."/>
            <person name="Maione D."/>
            <person name="Rinaudo D."/>
            <person name="Rappuoli R."/>
            <person name="Telford J.L."/>
            <person name="Kasper D.L."/>
            <person name="Grandi G."/>
            <person name="Fraser C.M."/>
        </authorList>
    </citation>
    <scope>NUCLEOTIDE SEQUENCE [LARGE SCALE GENOMIC DNA]</scope>
    <source>
        <strain>ATCC BAA-611 / 2603 V/R</strain>
    </source>
</reference>